<evidence type="ECO:0000255" key="1">
    <source>
        <dbReference type="HAMAP-Rule" id="MF_00151"/>
    </source>
</evidence>
<sequence>MDKAIYPGTFDPITRGHEDLVRRASGLFREVVVAVAASSGKKPFFTQEERVAMVRQVLTDYPNVKVMPFSGLLMEFAQQQQARVIVRGLRAVSDFEYEFQMAGMNRTLYPDVETLFLTPSEQYMFISATIVREIALFGGNIEKFVHPLISTQLGMKIASKDKSSR</sequence>
<dbReference type="EC" id="2.7.7.3" evidence="1"/>
<dbReference type="EMBL" id="CP000103">
    <property type="protein sequence ID" value="ABB76021.1"/>
    <property type="molecule type" value="Genomic_DNA"/>
</dbReference>
<dbReference type="RefSeq" id="WP_011382013.1">
    <property type="nucleotide sequence ID" value="NC_007614.1"/>
</dbReference>
<dbReference type="SMR" id="Q2Y5F0"/>
<dbReference type="STRING" id="323848.Nmul_A2734"/>
<dbReference type="KEGG" id="nmu:Nmul_A2734"/>
<dbReference type="eggNOG" id="COG0669">
    <property type="taxonomic scope" value="Bacteria"/>
</dbReference>
<dbReference type="HOGENOM" id="CLU_100149_0_1_4"/>
<dbReference type="OrthoDB" id="9806661at2"/>
<dbReference type="UniPathway" id="UPA00241">
    <property type="reaction ID" value="UER00355"/>
</dbReference>
<dbReference type="Proteomes" id="UP000002718">
    <property type="component" value="Chromosome"/>
</dbReference>
<dbReference type="GO" id="GO:0005737">
    <property type="term" value="C:cytoplasm"/>
    <property type="evidence" value="ECO:0007669"/>
    <property type="project" value="UniProtKB-SubCell"/>
</dbReference>
<dbReference type="GO" id="GO:0005524">
    <property type="term" value="F:ATP binding"/>
    <property type="evidence" value="ECO:0007669"/>
    <property type="project" value="UniProtKB-KW"/>
</dbReference>
<dbReference type="GO" id="GO:0004595">
    <property type="term" value="F:pantetheine-phosphate adenylyltransferase activity"/>
    <property type="evidence" value="ECO:0007669"/>
    <property type="project" value="UniProtKB-UniRule"/>
</dbReference>
<dbReference type="GO" id="GO:0015937">
    <property type="term" value="P:coenzyme A biosynthetic process"/>
    <property type="evidence" value="ECO:0007669"/>
    <property type="project" value="UniProtKB-UniRule"/>
</dbReference>
<dbReference type="CDD" id="cd02163">
    <property type="entry name" value="PPAT"/>
    <property type="match status" value="1"/>
</dbReference>
<dbReference type="Gene3D" id="3.40.50.620">
    <property type="entry name" value="HUPs"/>
    <property type="match status" value="1"/>
</dbReference>
<dbReference type="HAMAP" id="MF_00151">
    <property type="entry name" value="PPAT_bact"/>
    <property type="match status" value="1"/>
</dbReference>
<dbReference type="InterPro" id="IPR004821">
    <property type="entry name" value="Cyt_trans-like"/>
</dbReference>
<dbReference type="InterPro" id="IPR001980">
    <property type="entry name" value="PPAT"/>
</dbReference>
<dbReference type="InterPro" id="IPR014729">
    <property type="entry name" value="Rossmann-like_a/b/a_fold"/>
</dbReference>
<dbReference type="NCBIfam" id="TIGR01510">
    <property type="entry name" value="coaD_prev_kdtB"/>
    <property type="match status" value="1"/>
</dbReference>
<dbReference type="NCBIfam" id="TIGR00125">
    <property type="entry name" value="cyt_tran_rel"/>
    <property type="match status" value="1"/>
</dbReference>
<dbReference type="PANTHER" id="PTHR21342">
    <property type="entry name" value="PHOSPHOPANTETHEINE ADENYLYLTRANSFERASE"/>
    <property type="match status" value="1"/>
</dbReference>
<dbReference type="PANTHER" id="PTHR21342:SF1">
    <property type="entry name" value="PHOSPHOPANTETHEINE ADENYLYLTRANSFERASE"/>
    <property type="match status" value="1"/>
</dbReference>
<dbReference type="Pfam" id="PF01467">
    <property type="entry name" value="CTP_transf_like"/>
    <property type="match status" value="1"/>
</dbReference>
<dbReference type="PRINTS" id="PR01020">
    <property type="entry name" value="LPSBIOSNTHSS"/>
</dbReference>
<dbReference type="SUPFAM" id="SSF52374">
    <property type="entry name" value="Nucleotidylyl transferase"/>
    <property type="match status" value="1"/>
</dbReference>
<feature type="chain" id="PRO_1000011189" description="Phosphopantetheine adenylyltransferase">
    <location>
        <begin position="1"/>
        <end position="165"/>
    </location>
</feature>
<feature type="binding site" evidence="1">
    <location>
        <begin position="9"/>
        <end position="10"/>
    </location>
    <ligand>
        <name>ATP</name>
        <dbReference type="ChEBI" id="CHEBI:30616"/>
    </ligand>
</feature>
<feature type="binding site" evidence="1">
    <location>
        <position position="9"/>
    </location>
    <ligand>
        <name>substrate</name>
    </ligand>
</feature>
<feature type="binding site" evidence="1">
    <location>
        <position position="17"/>
    </location>
    <ligand>
        <name>ATP</name>
        <dbReference type="ChEBI" id="CHEBI:30616"/>
    </ligand>
</feature>
<feature type="binding site" evidence="1">
    <location>
        <position position="41"/>
    </location>
    <ligand>
        <name>substrate</name>
    </ligand>
</feature>
<feature type="binding site" evidence="1">
    <location>
        <position position="73"/>
    </location>
    <ligand>
        <name>substrate</name>
    </ligand>
</feature>
<feature type="binding site" evidence="1">
    <location>
        <position position="87"/>
    </location>
    <ligand>
        <name>substrate</name>
    </ligand>
</feature>
<feature type="binding site" evidence="1">
    <location>
        <begin position="88"/>
        <end position="90"/>
    </location>
    <ligand>
        <name>ATP</name>
        <dbReference type="ChEBI" id="CHEBI:30616"/>
    </ligand>
</feature>
<feature type="binding site" evidence="1">
    <location>
        <position position="98"/>
    </location>
    <ligand>
        <name>ATP</name>
        <dbReference type="ChEBI" id="CHEBI:30616"/>
    </ligand>
</feature>
<feature type="binding site" evidence="1">
    <location>
        <begin position="123"/>
        <end position="129"/>
    </location>
    <ligand>
        <name>ATP</name>
        <dbReference type="ChEBI" id="CHEBI:30616"/>
    </ligand>
</feature>
<feature type="site" description="Transition state stabilizer" evidence="1">
    <location>
        <position position="17"/>
    </location>
</feature>
<gene>
    <name evidence="1" type="primary">coaD</name>
    <name type="ordered locus">Nmul_A2734</name>
</gene>
<comment type="function">
    <text evidence="1">Reversibly transfers an adenylyl group from ATP to 4'-phosphopantetheine, yielding dephospho-CoA (dPCoA) and pyrophosphate.</text>
</comment>
<comment type="catalytic activity">
    <reaction evidence="1">
        <text>(R)-4'-phosphopantetheine + ATP + H(+) = 3'-dephospho-CoA + diphosphate</text>
        <dbReference type="Rhea" id="RHEA:19801"/>
        <dbReference type="ChEBI" id="CHEBI:15378"/>
        <dbReference type="ChEBI" id="CHEBI:30616"/>
        <dbReference type="ChEBI" id="CHEBI:33019"/>
        <dbReference type="ChEBI" id="CHEBI:57328"/>
        <dbReference type="ChEBI" id="CHEBI:61723"/>
        <dbReference type="EC" id="2.7.7.3"/>
    </reaction>
</comment>
<comment type="cofactor">
    <cofactor evidence="1">
        <name>Mg(2+)</name>
        <dbReference type="ChEBI" id="CHEBI:18420"/>
    </cofactor>
</comment>
<comment type="pathway">
    <text evidence="1">Cofactor biosynthesis; coenzyme A biosynthesis; CoA from (R)-pantothenate: step 4/5.</text>
</comment>
<comment type="subunit">
    <text evidence="1">Homohexamer.</text>
</comment>
<comment type="subcellular location">
    <subcellularLocation>
        <location evidence="1">Cytoplasm</location>
    </subcellularLocation>
</comment>
<comment type="similarity">
    <text evidence="1">Belongs to the bacterial CoaD family.</text>
</comment>
<organism>
    <name type="scientific">Nitrosospira multiformis (strain ATCC 25196 / NCIMB 11849 / C 71)</name>
    <dbReference type="NCBI Taxonomy" id="323848"/>
    <lineage>
        <taxon>Bacteria</taxon>
        <taxon>Pseudomonadati</taxon>
        <taxon>Pseudomonadota</taxon>
        <taxon>Betaproteobacteria</taxon>
        <taxon>Nitrosomonadales</taxon>
        <taxon>Nitrosomonadaceae</taxon>
        <taxon>Nitrosospira</taxon>
    </lineage>
</organism>
<keyword id="KW-0067">ATP-binding</keyword>
<keyword id="KW-0173">Coenzyme A biosynthesis</keyword>
<keyword id="KW-0963">Cytoplasm</keyword>
<keyword id="KW-0460">Magnesium</keyword>
<keyword id="KW-0547">Nucleotide-binding</keyword>
<keyword id="KW-0548">Nucleotidyltransferase</keyword>
<keyword id="KW-1185">Reference proteome</keyword>
<keyword id="KW-0808">Transferase</keyword>
<protein>
    <recommendedName>
        <fullName evidence="1">Phosphopantetheine adenylyltransferase</fullName>
        <ecNumber evidence="1">2.7.7.3</ecNumber>
    </recommendedName>
    <alternativeName>
        <fullName evidence="1">Dephospho-CoA pyrophosphorylase</fullName>
    </alternativeName>
    <alternativeName>
        <fullName evidence="1">Pantetheine-phosphate adenylyltransferase</fullName>
        <shortName evidence="1">PPAT</shortName>
    </alternativeName>
</protein>
<proteinExistence type="inferred from homology"/>
<accession>Q2Y5F0</accession>
<name>COAD_NITMU</name>
<reference key="1">
    <citation type="submission" date="2005-08" db="EMBL/GenBank/DDBJ databases">
        <title>Complete sequence of chromosome 1 of Nitrosospira multiformis ATCC 25196.</title>
        <authorList>
            <person name="Copeland A."/>
            <person name="Lucas S."/>
            <person name="Lapidus A."/>
            <person name="Barry K."/>
            <person name="Detter J.C."/>
            <person name="Glavina T."/>
            <person name="Hammon N."/>
            <person name="Israni S."/>
            <person name="Pitluck S."/>
            <person name="Chain P."/>
            <person name="Malfatti S."/>
            <person name="Shin M."/>
            <person name="Vergez L."/>
            <person name="Schmutz J."/>
            <person name="Larimer F."/>
            <person name="Land M."/>
            <person name="Hauser L."/>
            <person name="Kyrpides N."/>
            <person name="Lykidis A."/>
            <person name="Richardson P."/>
        </authorList>
    </citation>
    <scope>NUCLEOTIDE SEQUENCE [LARGE SCALE GENOMIC DNA]</scope>
    <source>
        <strain>ATCC 25196 / NCIMB 11849 / C 71</strain>
    </source>
</reference>